<evidence type="ECO:0000250" key="1"/>
<evidence type="ECO:0000250" key="2">
    <source>
        <dbReference type="UniProtKB" id="P98095"/>
    </source>
</evidence>
<evidence type="ECO:0000255" key="3"/>
<evidence type="ECO:0000255" key="4">
    <source>
        <dbReference type="PROSITE-ProRule" id="PRU00022"/>
    </source>
</evidence>
<evidence type="ECO:0000255" key="5">
    <source>
        <dbReference type="PROSITE-ProRule" id="PRU00076"/>
    </source>
</evidence>
<evidence type="ECO:0000256" key="6">
    <source>
        <dbReference type="SAM" id="MobiDB-lite"/>
    </source>
</evidence>
<evidence type="ECO:0000269" key="7">
    <source>
    </source>
</evidence>
<evidence type="ECO:0000269" key="8">
    <source>
    </source>
</evidence>
<evidence type="ECO:0000269" key="9">
    <source>
    </source>
</evidence>
<evidence type="ECO:0000305" key="10"/>
<evidence type="ECO:0007829" key="11">
    <source>
        <dbReference type="PDB" id="8R5W"/>
    </source>
</evidence>
<feature type="signal peptide" evidence="8">
    <location>
        <begin position="1"/>
        <end position="26"/>
    </location>
</feature>
<feature type="chain" id="PRO_0000007569" description="Fibulin-2">
    <location>
        <begin position="27"/>
        <end position="1221"/>
    </location>
</feature>
<feature type="domain" description="Anaphylatoxin-like 1" evidence="4">
    <location>
        <begin position="435"/>
        <end position="477"/>
    </location>
</feature>
<feature type="domain" description="Anaphylatoxin-like 2" evidence="4">
    <location>
        <begin position="478"/>
        <end position="510"/>
    </location>
</feature>
<feature type="domain" description="Anaphylatoxin-like 3" evidence="4">
    <location>
        <begin position="511"/>
        <end position="543"/>
    </location>
</feature>
<feature type="domain" description="EGF-like 1; calcium-binding" evidence="5">
    <location>
        <begin position="594"/>
        <end position="635"/>
    </location>
</feature>
<feature type="domain" description="EGF-like 2" evidence="5">
    <location>
        <begin position="669"/>
        <end position="708"/>
    </location>
</feature>
<feature type="domain" description="EGF-like 3; calcium-binding" evidence="5">
    <location>
        <begin position="709"/>
        <end position="755"/>
    </location>
</feature>
<feature type="domain" description="EGF-like 4; calcium-binding" evidence="5">
    <location>
        <begin position="756"/>
        <end position="800"/>
    </location>
</feature>
<feature type="domain" description="EGF-like 5; calcium-binding" evidence="5">
    <location>
        <begin position="801"/>
        <end position="846"/>
    </location>
</feature>
<feature type="domain" description="EGF-like 6; calcium-binding" evidence="5">
    <location>
        <begin position="847"/>
        <end position="894"/>
    </location>
</feature>
<feature type="domain" description="EGF-like 7; calcium-binding" evidence="5">
    <location>
        <begin position="895"/>
        <end position="937"/>
    </location>
</feature>
<feature type="domain" description="EGF-like 8; calcium-binding" evidence="5">
    <location>
        <begin position="938"/>
        <end position="979"/>
    </location>
</feature>
<feature type="domain" description="EGF-like 9; calcium-binding" evidence="5">
    <location>
        <begin position="980"/>
        <end position="1018"/>
    </location>
</feature>
<feature type="domain" description="EGF-like 10; calcium-binding" evidence="5">
    <location>
        <begin position="1019"/>
        <end position="1061"/>
    </location>
</feature>
<feature type="domain" description="EGF-like 11; calcium-binding" evidence="5">
    <location>
        <begin position="1062"/>
        <end position="1106"/>
    </location>
</feature>
<feature type="region of interest" description="N">
    <location>
        <begin position="27"/>
        <end position="434"/>
    </location>
</feature>
<feature type="region of interest" description="Subdomain NA (Cys-rich)">
    <location>
        <begin position="27"/>
        <end position="176"/>
    </location>
</feature>
<feature type="region of interest" description="Subdomain NB (Cys-free)">
    <location>
        <begin position="177"/>
        <end position="434"/>
    </location>
</feature>
<feature type="region of interest" description="Disordered" evidence="6">
    <location>
        <begin position="248"/>
        <end position="329"/>
    </location>
</feature>
<feature type="region of interest" description="Disordered" evidence="6">
    <location>
        <begin position="341"/>
        <end position="399"/>
    </location>
</feature>
<feature type="region of interest" description="Disordered" evidence="6">
    <location>
        <begin position="633"/>
        <end position="661"/>
    </location>
</feature>
<feature type="region of interest" description="Domain III">
    <location>
        <begin position="1111"/>
        <end position="1221"/>
    </location>
</feature>
<feature type="short sequence motif" description="Cell attachment site" evidence="3">
    <location>
        <begin position="421"/>
        <end position="423"/>
    </location>
</feature>
<feature type="compositionally biased region" description="Acidic residues" evidence="6">
    <location>
        <begin position="270"/>
        <end position="283"/>
    </location>
</feature>
<feature type="compositionally biased region" description="Basic and acidic residues" evidence="6">
    <location>
        <begin position="312"/>
        <end position="322"/>
    </location>
</feature>
<feature type="compositionally biased region" description="Polar residues" evidence="6">
    <location>
        <begin position="652"/>
        <end position="661"/>
    </location>
</feature>
<feature type="glycosylation site" description="N-linked (GlcNAc...) asparagine" evidence="3">
    <location>
        <position position="179"/>
    </location>
</feature>
<feature type="glycosylation site" description="N-linked (GlcNAc...) asparagine" evidence="3">
    <location>
        <position position="497"/>
    </location>
</feature>
<feature type="glycosylation site" description="N-linked (GlcNAc...) asparagine" evidence="3">
    <location>
        <position position="737"/>
    </location>
</feature>
<feature type="glycosylation site" description="N-linked (GlcNAc...) asparagine" evidence="3">
    <location>
        <position position="1072"/>
    </location>
</feature>
<feature type="disulfide bond" evidence="1">
    <location>
        <begin position="435"/>
        <end position="462"/>
    </location>
</feature>
<feature type="disulfide bond" evidence="1">
    <location>
        <begin position="436"/>
        <end position="469"/>
    </location>
</feature>
<feature type="disulfide bond" evidence="1">
    <location>
        <begin position="449"/>
        <end position="470"/>
    </location>
</feature>
<feature type="disulfide bond" evidence="1">
    <location>
        <begin position="479"/>
        <end position="508"/>
    </location>
</feature>
<feature type="disulfide bond" evidence="1">
    <location>
        <begin position="492"/>
        <end position="509"/>
    </location>
</feature>
<feature type="disulfide bond" evidence="1">
    <location>
        <begin position="511"/>
        <end position="535"/>
    </location>
</feature>
<feature type="disulfide bond" evidence="1">
    <location>
        <begin position="512"/>
        <end position="542"/>
    </location>
</feature>
<feature type="disulfide bond" evidence="1">
    <location>
        <begin position="525"/>
        <end position="543"/>
    </location>
</feature>
<feature type="disulfide bond" evidence="1">
    <location>
        <begin position="598"/>
        <end position="610"/>
    </location>
</feature>
<feature type="disulfide bond" evidence="1">
    <location>
        <begin position="606"/>
        <end position="619"/>
    </location>
</feature>
<feature type="disulfide bond" evidence="1">
    <location>
        <begin position="621"/>
        <end position="634"/>
    </location>
</feature>
<feature type="disulfide bond" evidence="1">
    <location>
        <begin position="673"/>
        <end position="683"/>
    </location>
</feature>
<feature type="disulfide bond" evidence="1">
    <location>
        <begin position="679"/>
        <end position="692"/>
    </location>
</feature>
<feature type="disulfide bond" evidence="1">
    <location>
        <begin position="694"/>
        <end position="707"/>
    </location>
</feature>
<feature type="disulfide bond" evidence="1">
    <location>
        <begin position="713"/>
        <end position="726"/>
    </location>
</feature>
<feature type="disulfide bond" evidence="1">
    <location>
        <begin position="720"/>
        <end position="735"/>
    </location>
</feature>
<feature type="disulfide bond" evidence="1">
    <location>
        <begin position="742"/>
        <end position="754"/>
    </location>
</feature>
<feature type="disulfide bond" evidence="1">
    <location>
        <begin position="805"/>
        <end position="818"/>
    </location>
</feature>
<feature type="disulfide bond" evidence="1">
    <location>
        <begin position="812"/>
        <end position="827"/>
    </location>
</feature>
<feature type="disulfide bond" evidence="1">
    <location>
        <begin position="833"/>
        <end position="845"/>
    </location>
</feature>
<feature type="disulfide bond" evidence="1">
    <location>
        <begin position="899"/>
        <end position="912"/>
    </location>
</feature>
<feature type="disulfide bond" evidence="1">
    <location>
        <begin position="906"/>
        <end position="921"/>
    </location>
</feature>
<feature type="disulfide bond" evidence="1">
    <location>
        <begin position="923"/>
        <end position="936"/>
    </location>
</feature>
<feature type="disulfide bond" evidence="1">
    <location>
        <begin position="942"/>
        <end position="954"/>
    </location>
</feature>
<feature type="disulfide bond" evidence="1">
    <location>
        <begin position="950"/>
        <end position="963"/>
    </location>
</feature>
<feature type="disulfide bond" evidence="1">
    <location>
        <begin position="965"/>
        <end position="978"/>
    </location>
</feature>
<feature type="disulfide bond" evidence="1">
    <location>
        <begin position="984"/>
        <end position="993"/>
    </location>
</feature>
<feature type="disulfide bond" evidence="1">
    <location>
        <begin position="989"/>
        <end position="1002"/>
    </location>
</feature>
<feature type="disulfide bond" evidence="1">
    <location>
        <begin position="1004"/>
        <end position="1017"/>
    </location>
</feature>
<feature type="disulfide bond" evidence="1">
    <location>
        <begin position="1023"/>
        <end position="1035"/>
    </location>
</feature>
<feature type="disulfide bond" evidence="1">
    <location>
        <begin position="1031"/>
        <end position="1044"/>
    </location>
</feature>
<feature type="disulfide bond" evidence="1">
    <location>
        <begin position="1046"/>
        <end position="1060"/>
    </location>
</feature>
<feature type="disulfide bond" evidence="1">
    <location>
        <begin position="1066"/>
        <end position="1079"/>
    </location>
</feature>
<feature type="disulfide bond" evidence="1">
    <location>
        <begin position="1073"/>
        <end position="1088"/>
    </location>
</feature>
<feature type="disulfide bond" evidence="1">
    <location>
        <begin position="1093"/>
        <end position="1105"/>
    </location>
</feature>
<feature type="splice variant" id="VSP_001391" description="In isoform 2." evidence="10">
    <location>
        <begin position="709"/>
        <end position="755"/>
    </location>
</feature>
<feature type="sequence conflict" description="In Ref. 2; AAD34456." evidence="10" ref="2">
    <original>HSGRKYAAGHTVHLSSCRAC</original>
    <variation>TVAVSICWPYRPPLILPGF</variation>
    <location>
        <begin position="140"/>
        <end position="159"/>
    </location>
</feature>
<feature type="sequence conflict" description="In Ref. 1; CAA53040 and 2; AAD34456." evidence="10" ref="1 2">
    <original>L</original>
    <variation>V</variation>
    <location>
        <position position="345"/>
    </location>
</feature>
<feature type="sequence conflict" description="In Ref. 2; AAD34456." evidence="10" ref="2">
    <original>S</original>
    <variation>L</variation>
    <location>
        <position position="348"/>
    </location>
</feature>
<feature type="sequence conflict" description="In Ref. 2; AAD34456." evidence="10" ref="2">
    <original>K</original>
    <variation>KQ</variation>
    <location>
        <position position="506"/>
    </location>
</feature>
<feature type="sequence conflict" description="In Ref. 1; CAA53040." evidence="10" ref="1">
    <original>E</original>
    <variation>Q</variation>
    <location>
        <position position="1102"/>
    </location>
</feature>
<feature type="helix" evidence="11">
    <location>
        <begin position="428"/>
        <end position="445"/>
    </location>
</feature>
<feature type="helix" evidence="11">
    <location>
        <begin position="460"/>
        <end position="488"/>
    </location>
</feature>
<feature type="helix" evidence="11">
    <location>
        <begin position="505"/>
        <end position="520"/>
    </location>
</feature>
<feature type="helix" evidence="11">
    <location>
        <begin position="529"/>
        <end position="531"/>
    </location>
</feature>
<feature type="helix" evidence="11">
    <location>
        <begin position="535"/>
        <end position="544"/>
    </location>
</feature>
<accession>P37889</accession>
<accession>G5E8B3</accession>
<accession>Q9WUI2</accession>
<protein>
    <recommendedName>
        <fullName>Fibulin-2</fullName>
        <shortName>FIBL-2</shortName>
    </recommendedName>
</protein>
<dbReference type="EMBL" id="X75285">
    <property type="protein sequence ID" value="CAA53040.1"/>
    <property type="molecule type" value="mRNA"/>
</dbReference>
<dbReference type="EMBL" id="AF135253">
    <property type="protein sequence ID" value="AAD34456.1"/>
    <property type="molecule type" value="Genomic_DNA"/>
</dbReference>
<dbReference type="EMBL" id="AF135239">
    <property type="protein sequence ID" value="AAD34456.1"/>
    <property type="status" value="JOINED"/>
    <property type="molecule type" value="Genomic_DNA"/>
</dbReference>
<dbReference type="EMBL" id="AF135240">
    <property type="protein sequence ID" value="AAD34456.1"/>
    <property type="status" value="JOINED"/>
    <property type="molecule type" value="Genomic_DNA"/>
</dbReference>
<dbReference type="EMBL" id="AF135241">
    <property type="protein sequence ID" value="AAD34456.1"/>
    <property type="status" value="JOINED"/>
    <property type="molecule type" value="Genomic_DNA"/>
</dbReference>
<dbReference type="EMBL" id="AF135242">
    <property type="protein sequence ID" value="AAD34456.1"/>
    <property type="status" value="JOINED"/>
    <property type="molecule type" value="Genomic_DNA"/>
</dbReference>
<dbReference type="EMBL" id="AF135243">
    <property type="protein sequence ID" value="AAD34456.1"/>
    <property type="status" value="JOINED"/>
    <property type="molecule type" value="Genomic_DNA"/>
</dbReference>
<dbReference type="EMBL" id="AF135244">
    <property type="protein sequence ID" value="AAD34456.1"/>
    <property type="status" value="JOINED"/>
    <property type="molecule type" value="Genomic_DNA"/>
</dbReference>
<dbReference type="EMBL" id="AF135245">
    <property type="protein sequence ID" value="AAD34456.1"/>
    <property type="status" value="JOINED"/>
    <property type="molecule type" value="Genomic_DNA"/>
</dbReference>
<dbReference type="EMBL" id="AF135246">
    <property type="protein sequence ID" value="AAD34456.1"/>
    <property type="status" value="JOINED"/>
    <property type="molecule type" value="Genomic_DNA"/>
</dbReference>
<dbReference type="EMBL" id="AF135247">
    <property type="protein sequence ID" value="AAD34456.1"/>
    <property type="status" value="JOINED"/>
    <property type="molecule type" value="Genomic_DNA"/>
</dbReference>
<dbReference type="EMBL" id="AF135248">
    <property type="protein sequence ID" value="AAD34456.1"/>
    <property type="status" value="JOINED"/>
    <property type="molecule type" value="Genomic_DNA"/>
</dbReference>
<dbReference type="EMBL" id="AF135249">
    <property type="protein sequence ID" value="AAD34456.1"/>
    <property type="status" value="JOINED"/>
    <property type="molecule type" value="Genomic_DNA"/>
</dbReference>
<dbReference type="EMBL" id="AF135250">
    <property type="protein sequence ID" value="AAD34456.1"/>
    <property type="status" value="JOINED"/>
    <property type="molecule type" value="Genomic_DNA"/>
</dbReference>
<dbReference type="EMBL" id="AF135251">
    <property type="protein sequence ID" value="AAD34456.1"/>
    <property type="status" value="JOINED"/>
    <property type="molecule type" value="Genomic_DNA"/>
</dbReference>
<dbReference type="EMBL" id="AF135252">
    <property type="protein sequence ID" value="AAD34456.1"/>
    <property type="status" value="JOINED"/>
    <property type="molecule type" value="Genomic_DNA"/>
</dbReference>
<dbReference type="EMBL" id="AC121990">
    <property type="status" value="NOT_ANNOTATED_CDS"/>
    <property type="molecule type" value="Genomic_DNA"/>
</dbReference>
<dbReference type="EMBL" id="AC131764">
    <property type="status" value="NOT_ANNOTATED_CDS"/>
    <property type="molecule type" value="Genomic_DNA"/>
</dbReference>
<dbReference type="EMBL" id="CH466523">
    <property type="protein sequence ID" value="EDK99296.1"/>
    <property type="molecule type" value="Genomic_DNA"/>
</dbReference>
<dbReference type="CCDS" id="CCDS39566.1">
    <molecule id="P37889-1"/>
</dbReference>
<dbReference type="CCDS" id="CCDS39567.1">
    <molecule id="P37889-2"/>
</dbReference>
<dbReference type="PIR" id="A49457">
    <property type="entry name" value="A49457"/>
</dbReference>
<dbReference type="RefSeq" id="NP_001074906.1">
    <molecule id="P37889-2"/>
    <property type="nucleotide sequence ID" value="NM_001081437.2"/>
</dbReference>
<dbReference type="RefSeq" id="NP_032018.2">
    <molecule id="P37889-1"/>
    <property type="nucleotide sequence ID" value="NM_007992.3"/>
</dbReference>
<dbReference type="RefSeq" id="XP_006505593.1">
    <molecule id="P37889-1"/>
    <property type="nucleotide sequence ID" value="XM_006505530.5"/>
</dbReference>
<dbReference type="RefSeq" id="XP_030111016.1">
    <molecule id="P37889-2"/>
    <property type="nucleotide sequence ID" value="XM_030255156.2"/>
</dbReference>
<dbReference type="PDB" id="8R5W">
    <property type="method" value="X-ray"/>
    <property type="resolution" value="2.20 A"/>
    <property type="chains" value="A/B/C/D/E/F/G/H=427-545"/>
</dbReference>
<dbReference type="PDBsum" id="8R5W"/>
<dbReference type="SMR" id="P37889"/>
<dbReference type="BioGRID" id="199606">
    <property type="interactions" value="9"/>
</dbReference>
<dbReference type="FunCoup" id="P37889">
    <property type="interactions" value="270"/>
</dbReference>
<dbReference type="IntAct" id="P37889">
    <property type="interactions" value="5"/>
</dbReference>
<dbReference type="STRING" id="10090.ENSMUSP00000048334"/>
<dbReference type="GlyCosmos" id="P37889">
    <property type="glycosylation" value="4 sites, No reported glycans"/>
</dbReference>
<dbReference type="GlyGen" id="P37889">
    <property type="glycosylation" value="6 sites, 1 N-linked glycan (1 site), 1 O-linked glycan (1 site)"/>
</dbReference>
<dbReference type="iPTMnet" id="P37889"/>
<dbReference type="PhosphoSitePlus" id="P37889"/>
<dbReference type="CPTAC" id="non-CPTAC-3981"/>
<dbReference type="jPOST" id="P37889"/>
<dbReference type="PaxDb" id="10090-ENSMUSP00000048334"/>
<dbReference type="PeptideAtlas" id="P37889"/>
<dbReference type="ProteomicsDB" id="267342">
    <molecule id="P37889-1"/>
</dbReference>
<dbReference type="ProteomicsDB" id="267343">
    <molecule id="P37889-2"/>
</dbReference>
<dbReference type="Pumba" id="P37889"/>
<dbReference type="Antibodypedia" id="1165">
    <property type="antibodies" value="269 antibodies from 32 providers"/>
</dbReference>
<dbReference type="DNASU" id="14115"/>
<dbReference type="Ensembl" id="ENSMUST00000041544.8">
    <molecule id="P37889-1"/>
    <property type="protein sequence ID" value="ENSMUSP00000048334.8"/>
    <property type="gene ID" value="ENSMUSG00000064080.13"/>
</dbReference>
<dbReference type="Ensembl" id="ENSMUST00000113498.9">
    <molecule id="P37889-2"/>
    <property type="protein sequence ID" value="ENSMUSP00000109126.3"/>
    <property type="gene ID" value="ENSMUSG00000064080.13"/>
</dbReference>
<dbReference type="GeneID" id="14115"/>
<dbReference type="KEGG" id="mmu:14115"/>
<dbReference type="UCSC" id="uc009cxw.1">
    <molecule id="P37889-1"/>
    <property type="organism name" value="mouse"/>
</dbReference>
<dbReference type="AGR" id="MGI:95488"/>
<dbReference type="CTD" id="2199"/>
<dbReference type="MGI" id="MGI:95488">
    <property type="gene designation" value="Fbln2"/>
</dbReference>
<dbReference type="VEuPathDB" id="HostDB:ENSMUSG00000064080"/>
<dbReference type="eggNOG" id="KOG1217">
    <property type="taxonomic scope" value="Eukaryota"/>
</dbReference>
<dbReference type="GeneTree" id="ENSGT00940000156047"/>
<dbReference type="HOGENOM" id="CLU_268948_0_0_1"/>
<dbReference type="InParanoid" id="P37889"/>
<dbReference type="OMA" id="MNTCRDI"/>
<dbReference type="OrthoDB" id="4062651at2759"/>
<dbReference type="PhylomeDB" id="P37889"/>
<dbReference type="TreeFam" id="TF317514"/>
<dbReference type="Reactome" id="R-MMU-2129379">
    <property type="pathway name" value="Molecules associated with elastic fibres"/>
</dbReference>
<dbReference type="BioGRID-ORCS" id="14115">
    <property type="hits" value="6 hits in 76 CRISPR screens"/>
</dbReference>
<dbReference type="ChiTaRS" id="Fbln2">
    <property type="organism name" value="mouse"/>
</dbReference>
<dbReference type="PRO" id="PR:P37889"/>
<dbReference type="Proteomes" id="UP000000589">
    <property type="component" value="Chromosome 6"/>
</dbReference>
<dbReference type="RNAct" id="P37889">
    <property type="molecule type" value="protein"/>
</dbReference>
<dbReference type="Bgee" id="ENSMUSG00000064080">
    <property type="expression patterns" value="Expressed in stroma of bone marrow and 254 other cell types or tissues"/>
</dbReference>
<dbReference type="ExpressionAtlas" id="P37889">
    <property type="expression patterns" value="baseline and differential"/>
</dbReference>
<dbReference type="GO" id="GO:0062023">
    <property type="term" value="C:collagen-containing extracellular matrix"/>
    <property type="evidence" value="ECO:0007005"/>
    <property type="project" value="UniProtKB"/>
</dbReference>
<dbReference type="GO" id="GO:0005576">
    <property type="term" value="C:extracellular region"/>
    <property type="evidence" value="ECO:0007669"/>
    <property type="project" value="UniProtKB-KW"/>
</dbReference>
<dbReference type="GO" id="GO:0005509">
    <property type="term" value="F:calcium ion binding"/>
    <property type="evidence" value="ECO:0007669"/>
    <property type="project" value="InterPro"/>
</dbReference>
<dbReference type="GO" id="GO:0050840">
    <property type="term" value="F:extracellular matrix binding"/>
    <property type="evidence" value="ECO:0000314"/>
    <property type="project" value="MGI"/>
</dbReference>
<dbReference type="GO" id="GO:0010811">
    <property type="term" value="P:positive regulation of cell-substrate adhesion"/>
    <property type="evidence" value="ECO:0000314"/>
    <property type="project" value="MGI"/>
</dbReference>
<dbReference type="CDD" id="cd00017">
    <property type="entry name" value="ANATO"/>
    <property type="match status" value="2"/>
</dbReference>
<dbReference type="CDD" id="cd00054">
    <property type="entry name" value="EGF_CA"/>
    <property type="match status" value="8"/>
</dbReference>
<dbReference type="FunFam" id="2.10.25.10:FF:000324">
    <property type="entry name" value="Fibulin 2"/>
    <property type="match status" value="1"/>
</dbReference>
<dbReference type="FunFam" id="2.10.25.10:FF:000341">
    <property type="entry name" value="Fibulin 2"/>
    <property type="match status" value="1"/>
</dbReference>
<dbReference type="FunFam" id="2.10.25.10:FF:000564">
    <property type="entry name" value="Fibulin 2"/>
    <property type="match status" value="1"/>
</dbReference>
<dbReference type="FunFam" id="2.10.25.10:FF:000578">
    <property type="entry name" value="Fibulin 2"/>
    <property type="match status" value="1"/>
</dbReference>
<dbReference type="FunFam" id="2.10.25.10:FF:000078">
    <property type="entry name" value="Fibulin-1"/>
    <property type="match status" value="2"/>
</dbReference>
<dbReference type="FunFam" id="2.10.25.10:FF:000108">
    <property type="entry name" value="Fibulin-1"/>
    <property type="match status" value="2"/>
</dbReference>
<dbReference type="FunFam" id="2.10.25.10:FF:000139">
    <property type="entry name" value="Fibulin-1"/>
    <property type="match status" value="1"/>
</dbReference>
<dbReference type="FunFam" id="2.10.25.10:FF:000010">
    <property type="entry name" value="Pro-epidermal growth factor"/>
    <property type="match status" value="2"/>
</dbReference>
<dbReference type="Gene3D" id="2.10.25.10">
    <property type="entry name" value="Laminin"/>
    <property type="match status" value="11"/>
</dbReference>
<dbReference type="InterPro" id="IPR000020">
    <property type="entry name" value="Anaphylatoxin/fibulin"/>
</dbReference>
<dbReference type="InterPro" id="IPR026823">
    <property type="entry name" value="cEGF"/>
</dbReference>
<dbReference type="InterPro" id="IPR050751">
    <property type="entry name" value="ECM_structural_protein"/>
</dbReference>
<dbReference type="InterPro" id="IPR001881">
    <property type="entry name" value="EGF-like_Ca-bd_dom"/>
</dbReference>
<dbReference type="InterPro" id="IPR000742">
    <property type="entry name" value="EGF-like_dom"/>
</dbReference>
<dbReference type="InterPro" id="IPR000152">
    <property type="entry name" value="EGF-type_Asp/Asn_hydroxyl_site"/>
</dbReference>
<dbReference type="InterPro" id="IPR018097">
    <property type="entry name" value="EGF_Ca-bd_CS"/>
</dbReference>
<dbReference type="InterPro" id="IPR056612">
    <property type="entry name" value="FIBL-2_dom"/>
</dbReference>
<dbReference type="InterPro" id="IPR055088">
    <property type="entry name" value="Fibulin_C"/>
</dbReference>
<dbReference type="InterPro" id="IPR009030">
    <property type="entry name" value="Growth_fac_rcpt_cys_sf"/>
</dbReference>
<dbReference type="InterPro" id="IPR049883">
    <property type="entry name" value="NOTCH1_EGF-like"/>
</dbReference>
<dbReference type="PANTHER" id="PTHR24034">
    <property type="entry name" value="EGF-LIKE DOMAIN-CONTAINING PROTEIN"/>
    <property type="match status" value="1"/>
</dbReference>
<dbReference type="PANTHER" id="PTHR24034:SF209">
    <property type="entry name" value="EGF-LIKE DOMAIN-CONTAINING PROTEIN"/>
    <property type="match status" value="1"/>
</dbReference>
<dbReference type="Pfam" id="PF01821">
    <property type="entry name" value="ANATO"/>
    <property type="match status" value="2"/>
</dbReference>
<dbReference type="Pfam" id="PF12662">
    <property type="entry name" value="cEGF"/>
    <property type="match status" value="2"/>
</dbReference>
<dbReference type="Pfam" id="PF07645">
    <property type="entry name" value="EGF_CA"/>
    <property type="match status" value="6"/>
</dbReference>
<dbReference type="Pfam" id="PF24532">
    <property type="entry name" value="FIBL-2"/>
    <property type="match status" value="1"/>
</dbReference>
<dbReference type="Pfam" id="PF22914">
    <property type="entry name" value="Fibulin_C"/>
    <property type="match status" value="1"/>
</dbReference>
<dbReference type="Pfam" id="PF14670">
    <property type="entry name" value="FXa_inhibition"/>
    <property type="match status" value="1"/>
</dbReference>
<dbReference type="SMART" id="SM00104">
    <property type="entry name" value="ANATO"/>
    <property type="match status" value="3"/>
</dbReference>
<dbReference type="SMART" id="SM00181">
    <property type="entry name" value="EGF"/>
    <property type="match status" value="11"/>
</dbReference>
<dbReference type="SMART" id="SM00179">
    <property type="entry name" value="EGF_CA"/>
    <property type="match status" value="10"/>
</dbReference>
<dbReference type="SUPFAM" id="SSF57196">
    <property type="entry name" value="EGF/Laminin"/>
    <property type="match status" value="2"/>
</dbReference>
<dbReference type="SUPFAM" id="SSF57184">
    <property type="entry name" value="Growth factor receptor domain"/>
    <property type="match status" value="3"/>
</dbReference>
<dbReference type="PROSITE" id="PS01177">
    <property type="entry name" value="ANAPHYLATOXIN_1"/>
    <property type="match status" value="3"/>
</dbReference>
<dbReference type="PROSITE" id="PS01178">
    <property type="entry name" value="ANAPHYLATOXIN_2"/>
    <property type="match status" value="3"/>
</dbReference>
<dbReference type="PROSITE" id="PS00010">
    <property type="entry name" value="ASX_HYDROXYL"/>
    <property type="match status" value="5"/>
</dbReference>
<dbReference type="PROSITE" id="PS01186">
    <property type="entry name" value="EGF_2"/>
    <property type="match status" value="5"/>
</dbReference>
<dbReference type="PROSITE" id="PS50026">
    <property type="entry name" value="EGF_3"/>
    <property type="match status" value="5"/>
</dbReference>
<dbReference type="PROSITE" id="PS01187">
    <property type="entry name" value="EGF_CA"/>
    <property type="match status" value="10"/>
</dbReference>
<reference key="1">
    <citation type="journal article" date="1993" name="J. Cell Biol.">
        <title>Structure and expression of fibulin-2, a novel extracellular matrix protein with multiple EGF-like repeats and consensus motifs for calcium binding.</title>
        <authorList>
            <person name="Pan T.-C."/>
            <person name="Sasaki T."/>
            <person name="Zhang R.-Z."/>
            <person name="Faessler R."/>
            <person name="Timpl R."/>
            <person name="Chu M.-L."/>
        </authorList>
    </citation>
    <scope>NUCLEOTIDE SEQUENCE [MRNA]</scope>
    <scope>PROTEIN SEQUENCE OF 27-35</scope>
    <source>
        <tissue>Fibroblast</tissue>
    </source>
</reference>
<reference key="2">
    <citation type="journal article" date="1999" name="Eur. J. Biochem.">
        <title>Mouse fibulin-2 gene. Complete exon-intron organization and promoter characterization.</title>
        <authorList>
            <person name="Graessel S."/>
            <person name="Sicot F.-X."/>
            <person name="Gotta S."/>
            <person name="Chu M.-L."/>
        </authorList>
    </citation>
    <scope>NUCLEOTIDE SEQUENCE [GENOMIC DNA]</scope>
    <scope>ALTERNATIVE SPLICING</scope>
</reference>
<reference key="3">
    <citation type="journal article" date="2009" name="PLoS Biol.">
        <title>Lineage-specific biology revealed by a finished genome assembly of the mouse.</title>
        <authorList>
            <person name="Church D.M."/>
            <person name="Goodstadt L."/>
            <person name="Hillier L.W."/>
            <person name="Zody M.C."/>
            <person name="Goldstein S."/>
            <person name="She X."/>
            <person name="Bult C.J."/>
            <person name="Agarwala R."/>
            <person name="Cherry J.L."/>
            <person name="DiCuccio M."/>
            <person name="Hlavina W."/>
            <person name="Kapustin Y."/>
            <person name="Meric P."/>
            <person name="Maglott D."/>
            <person name="Birtle Z."/>
            <person name="Marques A.C."/>
            <person name="Graves T."/>
            <person name="Zhou S."/>
            <person name="Teague B."/>
            <person name="Potamousis K."/>
            <person name="Churas C."/>
            <person name="Place M."/>
            <person name="Herschleb J."/>
            <person name="Runnheim R."/>
            <person name="Forrest D."/>
            <person name="Amos-Landgraf J."/>
            <person name="Schwartz D.C."/>
            <person name="Cheng Z."/>
            <person name="Lindblad-Toh K."/>
            <person name="Eichler E.E."/>
            <person name="Ponting C.P."/>
        </authorList>
    </citation>
    <scope>NUCLEOTIDE SEQUENCE [LARGE SCALE GENOMIC DNA]</scope>
    <source>
        <strain>C57BL/6J</strain>
    </source>
</reference>
<reference key="4">
    <citation type="submission" date="2005-07" db="EMBL/GenBank/DDBJ databases">
        <authorList>
            <person name="Mural R.J."/>
            <person name="Adams M.D."/>
            <person name="Myers E.W."/>
            <person name="Smith H.O."/>
            <person name="Venter J.C."/>
        </authorList>
    </citation>
    <scope>NUCLEOTIDE SEQUENCE [LARGE SCALE GENOMIC DNA]</scope>
</reference>
<reference key="5">
    <citation type="journal article" date="1996" name="Eur. J. Biochem.">
        <title>Different susceptibilities of fibulin-1 and fibulin-2 to cleavage by matrix metalloproteinases and other tissue proteases.</title>
        <authorList>
            <person name="Sasaki T."/>
            <person name="Mann K."/>
            <person name="Murphy G."/>
            <person name="Chu M.-L."/>
            <person name="Timpl R."/>
        </authorList>
    </citation>
    <scope>PARTIAL PROTEIN SEQUENCE</scope>
</reference>
<reference key="6">
    <citation type="journal article" date="1996" name="Dev. Dyn.">
        <title>Fibulin-1 and fibulin-2 expression during organogenesis in the developing mouse embryo.</title>
        <authorList>
            <person name="Zhang H.-Y."/>
            <person name="Timpl R."/>
            <person name="Sasaki T."/>
            <person name="Chu M.-L."/>
            <person name="Ekblom P."/>
        </authorList>
    </citation>
    <scope>DEVELOPMENTAL STAGE</scope>
</reference>
<reference key="7">
    <citation type="journal article" date="1999" name="EMBO J.">
        <title>Binding of the G domains of laminin alpha1 and alpha2 chains and perlecan to heparin, sulfatides, alpha-dystroglycan and several extracellular matrix proteins.</title>
        <authorList>
            <person name="Talts J.F."/>
            <person name="Andac Z."/>
            <person name="Goehring W."/>
            <person name="Brancaccio A."/>
            <person name="Timpl R."/>
        </authorList>
    </citation>
    <scope>INTERACTION WITH LAMA2</scope>
</reference>
<reference key="8">
    <citation type="journal article" date="2001" name="Eur. J. Haematol.">
        <title>Glucocorticoids down-regulate the extracellular matrix proteins fibronectin, fibulin-1 and fibulin-2 in bone marrow stroma.</title>
        <authorList>
            <person name="Gu Y.-C."/>
            <person name="Talts J.F."/>
            <person name="Gullberg D."/>
            <person name="Timpl R."/>
            <person name="Ekblom M."/>
        </authorList>
    </citation>
    <scope>DOWN-REGULATION BY GLUCOCORTICOIDS</scope>
</reference>
<reference key="9">
    <citation type="journal article" date="2010" name="Cell">
        <title>A tissue-specific atlas of mouse protein phosphorylation and expression.</title>
        <authorList>
            <person name="Huttlin E.L."/>
            <person name="Jedrychowski M.P."/>
            <person name="Elias J.E."/>
            <person name="Goswami T."/>
            <person name="Rad R."/>
            <person name="Beausoleil S.A."/>
            <person name="Villen J."/>
            <person name="Haas W."/>
            <person name="Sowa M.E."/>
            <person name="Gygi S.P."/>
        </authorList>
    </citation>
    <scope>IDENTIFICATION BY MASS SPECTROMETRY [LARGE SCALE ANALYSIS]</scope>
    <source>
        <tissue>Heart</tissue>
    </source>
</reference>
<organism>
    <name type="scientific">Mus musculus</name>
    <name type="common">Mouse</name>
    <dbReference type="NCBI Taxonomy" id="10090"/>
    <lineage>
        <taxon>Eukaryota</taxon>
        <taxon>Metazoa</taxon>
        <taxon>Chordata</taxon>
        <taxon>Craniata</taxon>
        <taxon>Vertebrata</taxon>
        <taxon>Euteleostomi</taxon>
        <taxon>Mammalia</taxon>
        <taxon>Eutheria</taxon>
        <taxon>Euarchontoglires</taxon>
        <taxon>Glires</taxon>
        <taxon>Rodentia</taxon>
        <taxon>Myomorpha</taxon>
        <taxon>Muroidea</taxon>
        <taxon>Muridae</taxon>
        <taxon>Murinae</taxon>
        <taxon>Mus</taxon>
        <taxon>Mus</taxon>
    </lineage>
</organism>
<proteinExistence type="evidence at protein level"/>
<name>FBLN2_MOUSE</name>
<comment type="function">
    <text evidence="2">Its binding to fibronectin and some other ligands is calcium dependent. May act as an adapter that mediates the interaction between FBN1 and ELN.</text>
</comment>
<comment type="subunit">
    <text evidence="2 7">Homotrimer; disulfide-linked. Interacts with LAMA2 (PubMed:10022829). Interacts with FBN1 (via N-terminal domain). Forms a ternary complex with ELN and FBN1 (By similarity).</text>
</comment>
<comment type="interaction">
    <interactant intactId="EBI-645953">
        <id>P37889-1</id>
    </interactant>
    <interactant intactId="EBI-488313">
        <id>Q62406-1</id>
        <label>Irak1</label>
    </interactant>
    <organismsDiffer>false</organismsDiffer>
    <experiments>10</experiments>
</comment>
<comment type="subcellular location">
    <subcellularLocation>
        <location>Secreted</location>
        <location>Extracellular space</location>
        <location>Extracellular matrix</location>
    </subcellularLocation>
</comment>
<comment type="alternative products">
    <event type="alternative splicing"/>
    <isoform>
        <id>P37889-1</id>
        <name>1</name>
        <sequence type="displayed"/>
    </isoform>
    <isoform>
        <id>P37889-2</id>
        <name>2</name>
        <name>EGF3-less</name>
        <sequence type="described" ref="VSP_001391"/>
    </isoform>
    <text>Additional isoforms seem to exist.</text>
</comment>
<comment type="tissue specificity">
    <text>Component of both basement membranes and other connective tissues.</text>
</comment>
<comment type="developmental stage">
    <text evidence="9">The differential expression of the fibulin family contributes to the formation of molecularly distinct extracellular matrices already during early developmental stages of a large number of tissues.</text>
</comment>
<comment type="induction">
    <text>Glucocorticoids suppressed mRNA expression and protein synthesis.</text>
</comment>
<comment type="similarity">
    <text evidence="10">Belongs to the fibulin family.</text>
</comment>
<keyword id="KW-0002">3D-structure</keyword>
<keyword id="KW-0025">Alternative splicing</keyword>
<keyword id="KW-0106">Calcium</keyword>
<keyword id="KW-0903">Direct protein sequencing</keyword>
<keyword id="KW-1015">Disulfide bond</keyword>
<keyword id="KW-0245">EGF-like domain</keyword>
<keyword id="KW-0272">Extracellular matrix</keyword>
<keyword id="KW-0325">Glycoprotein</keyword>
<keyword id="KW-1185">Reference proteome</keyword>
<keyword id="KW-0677">Repeat</keyword>
<keyword id="KW-0964">Secreted</keyword>
<keyword id="KW-0732">Signal</keyword>
<gene>
    <name type="primary">Fbln2</name>
</gene>
<sequence length="1221" mass="131834">MLLQESAGVWLALALVTALTPSPSMAVPWQDCTGAECPLLENCIEEALEPGACCATCVQQGCACEGYQYYDCVQGGFVDGRVPAGQSYFVDFGSTECSCPPGGGKISCQFMLCPELPPNCIEAVVVADSCPQCGQVGCVHSGRKYAAGHTVHLSSCRACHCPDAGGELICYQLPGCHGNFSDAEEGDSERQYEDPYSYDQEVAEAEATTAIVNEVQAGAEGPPAALGGGNLPPSSIRVTPWPVALPRPTAAAALGPPAPVQAKARRVTLDTEEDEEEEEEETLVTEPPTAGSPGRLDSLPTRSPARPGFPVQEKEAEAKAGPEENLIPDAQVTPRSVMQEGAAPLPRSGLAALSPSLATDSSSEDPVKPSDHPTLSTLPPDRAQVSPSPETPEEIPQHPQLLPRFRAEEDIDPNSVHSVPRGDLDGSTKDLIETCCAAGQQWAIDNDECQEIPENGAQSDICRIAQRQCCISYLKEKSCVAGVMGAKEGETCGAEDNDTCGVSLYKQCCDCCGLGLRVRAEGQSCESNPNLGYPCNHVMLSCCEGEEPLIVPEVRRPPEPEAAPRRVSEMEMASREALSLGTEAELPNSLPGDDQDECLMLPGELCQHLCINTVGSYRCACFPGFELQGDGRTCRPDRGAPQLDTARESAPRSESAQVSPNTIPLPVPQPNTCKDNGPCRQVCRVVGDTAMCSCFPGYAIMADGVSCEDQDECLMGTHDCSWKQFCVNTLGSFYCVNHTVLCAEGYILNAHRKCVDINECVTDLHTCTRAEHCVNTPGSFQCYKALTCEPGYVLTDGECTDVDECVTGTHNCQAGFSCQNTKGSFYCQARQRCMDGFLQDPEGNCVDINECTSLLEPCRSGFSCINTVGSYTCQRNPLVCGRGYHANEEGSECVDVNECETGVHRCGEGQLCYNLPGSYRCDCKPGFQRDAFGRTCIDVNECWVSPGRLCQHTCENTPGSYRCSCAAGFLLAADGKHCEDVNECETRRCSQECANIYGSYQCYCRQGYQLAEDGHTCTDIDECAQGAGILCTFRCVNVPGSYQCACPEQGYTMMANGRSCKDLDECALGTHNCSEAETCHNIQGSFRCLRFDCPPNYVRVSETKCERTTCQDITECQTSPARITHYQLNFQTGLLVPAHIFRIGPAPAFAGDTISLTITKGNEEGYFVTRRLNAYTGVVSLQRSVLEPRDFALDVEMKLWRQGSVTTFLAKMYIFFTTFAP</sequence>